<proteinExistence type="evidence at protein level"/>
<accession>Q8H0X6</accession>
<accession>Q8VZA2</accession>
<accession>Q9FUB0</accession>
<accession>Q9LHF9</accession>
<organism>
    <name type="scientific">Arabidopsis thaliana</name>
    <name type="common">Mouse-ear cress</name>
    <dbReference type="NCBI Taxonomy" id="3702"/>
    <lineage>
        <taxon>Eukaryota</taxon>
        <taxon>Viridiplantae</taxon>
        <taxon>Streptophyta</taxon>
        <taxon>Embryophyta</taxon>
        <taxon>Tracheophyta</taxon>
        <taxon>Spermatophyta</taxon>
        <taxon>Magnoliopsida</taxon>
        <taxon>eudicotyledons</taxon>
        <taxon>Gunneridae</taxon>
        <taxon>Pentapetalae</taxon>
        <taxon>rosids</taxon>
        <taxon>malvids</taxon>
        <taxon>Brassicales</taxon>
        <taxon>Brassicaceae</taxon>
        <taxon>Camelineae</taxon>
        <taxon>Arabidopsis</taxon>
    </lineage>
</organism>
<feature type="signal peptide" evidence="2">
    <location>
        <begin position="1"/>
        <end position="24"/>
    </location>
</feature>
<feature type="chain" id="PRO_0000277498" description="Cysteine proteinase inhibitor 6">
    <location>
        <begin position="25"/>
        <end position="234"/>
    </location>
</feature>
<feature type="domain" description="Cystatin 1">
    <location>
        <begin position="38"/>
        <end position="126"/>
    </location>
</feature>
<feature type="domain" description="Cystatin 2">
    <location>
        <begin position="145"/>
        <end position="215"/>
    </location>
</feature>
<feature type="region of interest" description="Disordered" evidence="3">
    <location>
        <begin position="133"/>
        <end position="154"/>
    </location>
</feature>
<feature type="short sequence motif" description="Secondary area of contact" evidence="1">
    <location>
        <begin position="82"/>
        <end position="86"/>
    </location>
</feature>
<feature type="compositionally biased region" description="Basic and acidic residues" evidence="3">
    <location>
        <begin position="140"/>
        <end position="154"/>
    </location>
</feature>
<feature type="site" description="Reactive site" evidence="1">
    <location>
        <position position="38"/>
    </location>
</feature>
<feature type="modified residue" description="Phosphoserine" evidence="6">
    <location>
        <position position="174"/>
    </location>
</feature>
<feature type="splice variant" id="VSP_023022" description="In isoform 2." evidence="4">
    <location>
        <begin position="1"/>
        <end position="33"/>
    </location>
</feature>
<feature type="sequence conflict" description="In Ref. 6; AAG31653." evidence="5" ref="6">
    <original>K</original>
    <variation>T</variation>
    <location>
        <position position="123"/>
    </location>
</feature>
<feature type="sequence conflict" description="In Ref. 5; AAN65082." evidence="5" ref="5">
    <original>V</original>
    <variation>A</variation>
    <location>
        <position position="160"/>
    </location>
</feature>
<feature type="sequence conflict" description="In Ref. 6; AAG31653." evidence="5" ref="6">
    <original>L</original>
    <variation>V</variation>
    <location>
        <position position="226"/>
    </location>
</feature>
<feature type="initiator methionine" description="Removed" evidence="7">
    <location sequence="Q8H0X6-2">
        <position position="1"/>
    </location>
</feature>
<feature type="modified residue" description="N-acetylalanine" evidence="7">
    <location sequence="Q8H0X6-2">
        <position position="2"/>
    </location>
</feature>
<evidence type="ECO:0000250" key="1"/>
<evidence type="ECO:0000255" key="2"/>
<evidence type="ECO:0000256" key="3">
    <source>
        <dbReference type="SAM" id="MobiDB-lite"/>
    </source>
</evidence>
<evidence type="ECO:0000303" key="4">
    <source ref="4"/>
</evidence>
<evidence type="ECO:0000305" key="5"/>
<evidence type="ECO:0007744" key="6">
    <source>
    </source>
</evidence>
<evidence type="ECO:0007744" key="7">
    <source>
    </source>
</evidence>
<sequence>MMRSRFLLFIVFFSLSLFISSLIASDLGFCNEEMALVGGVGDVPANQNSGEVESLARFAVDEHNKKENALLEFARVVKAKEQVVAGTLHHLTLEILEAGQKKLYEAKVWVKPWLNFKELQEFKPASDAPAITSSDLGCKQGEHESGWREVPGDDPEVKHVAEQAVKTIQQRSNSLFPYELLEVVHAKAEVTGEAAKYNMLLKLKRGEKEEKFKVEVHKNHEGALHLNHAEQHHD</sequence>
<comment type="function">
    <text evidence="1">Specific inhibitor of cysteine proteinases. Probably involved in the regulation of endogenous processes and in defense against pests and pathogens (By similarity).</text>
</comment>
<comment type="interaction">
    <interactant intactId="EBI-8760191">
        <id>Q8H0X6</id>
    </interactant>
    <interactant intactId="EBI-8760221">
        <id>F4IZC5</id>
        <label>CAN1</label>
    </interactant>
    <organismsDiffer>false</organismsDiffer>
    <experiments>3</experiments>
</comment>
<comment type="subcellular location">
    <subcellularLocation>
        <location evidence="5">Secreted</location>
    </subcellularLocation>
</comment>
<comment type="alternative products">
    <event type="alternative splicing"/>
    <isoform>
        <id>Q8H0X6-1</id>
        <name>1</name>
        <sequence type="displayed"/>
    </isoform>
    <isoform>
        <id>Q8H0X6-2</id>
        <name>2</name>
        <sequence type="described" ref="VSP_023022"/>
    </isoform>
</comment>
<comment type="similarity">
    <text evidence="5">Belongs to the cystatin family. Phytocystatin subfamily.</text>
</comment>
<comment type="sequence caution" evidence="5">
    <conflict type="erroneous initiation">
        <sequence resource="EMBL-CDS" id="AAL38303"/>
    </conflict>
</comment>
<gene>
    <name type="primary">CYS6</name>
    <name type="ordered locus">At3g12490</name>
    <name type="ORF">MQC3.31</name>
    <name type="ORF">T2E22.19</name>
</gene>
<dbReference type="EMBL" id="AP002047">
    <property type="protein sequence ID" value="BAB03156.1"/>
    <property type="molecule type" value="Genomic_DNA"/>
</dbReference>
<dbReference type="EMBL" id="AC069474">
    <property type="protein sequence ID" value="AAG51028.1"/>
    <property type="molecule type" value="Genomic_DNA"/>
</dbReference>
<dbReference type="EMBL" id="CP002686">
    <property type="protein sequence ID" value="AEE75201.1"/>
    <property type="molecule type" value="Genomic_DNA"/>
</dbReference>
<dbReference type="EMBL" id="AY085950">
    <property type="protein sequence ID" value="AAM63160.1"/>
    <property type="molecule type" value="mRNA"/>
</dbReference>
<dbReference type="EMBL" id="AY065127">
    <property type="protein sequence ID" value="AAL38303.1"/>
    <property type="status" value="ALT_INIT"/>
    <property type="molecule type" value="mRNA"/>
</dbReference>
<dbReference type="EMBL" id="BT001195">
    <property type="protein sequence ID" value="AAN65082.1"/>
    <property type="molecule type" value="mRNA"/>
</dbReference>
<dbReference type="EMBL" id="AF315737">
    <property type="protein sequence ID" value="AAG31653.1"/>
    <property type="molecule type" value="mRNA"/>
</dbReference>
<dbReference type="RefSeq" id="NP_850570.2">
    <molecule id="Q8H0X6-1"/>
    <property type="nucleotide sequence ID" value="NM_180239.4"/>
</dbReference>
<dbReference type="SMR" id="Q8H0X6"/>
<dbReference type="BioGRID" id="5762">
    <property type="interactions" value="2"/>
</dbReference>
<dbReference type="FunCoup" id="Q8H0X6">
    <property type="interactions" value="443"/>
</dbReference>
<dbReference type="IntAct" id="Q8H0X6">
    <property type="interactions" value="1"/>
</dbReference>
<dbReference type="MINT" id="Q8H0X6"/>
<dbReference type="STRING" id="3702.Q8H0X6"/>
<dbReference type="MEROPS" id="I25.014"/>
<dbReference type="iPTMnet" id="Q8H0X6"/>
<dbReference type="SwissPalm" id="Q8H0X6"/>
<dbReference type="PaxDb" id="3702-AT3G12490.2"/>
<dbReference type="ProteomicsDB" id="222597">
    <molecule id="Q8H0X6-1"/>
</dbReference>
<dbReference type="EnsemblPlants" id="AT3G12490.2">
    <molecule id="Q8H0X6-1"/>
    <property type="protein sequence ID" value="AT3G12490.2"/>
    <property type="gene ID" value="AT3G12490"/>
</dbReference>
<dbReference type="Gramene" id="AT3G12490.2">
    <molecule id="Q8H0X6-1"/>
    <property type="protein sequence ID" value="AT3G12490.2"/>
    <property type="gene ID" value="AT3G12490"/>
</dbReference>
<dbReference type="KEGG" id="ath:AT3G12490"/>
<dbReference type="Araport" id="AT3G12490"/>
<dbReference type="TAIR" id="AT3G12490">
    <property type="gene designation" value="CYSB"/>
</dbReference>
<dbReference type="eggNOG" id="ENOG502QRXR">
    <property type="taxonomic scope" value="Eukaryota"/>
</dbReference>
<dbReference type="InParanoid" id="Q8H0X6"/>
<dbReference type="PhylomeDB" id="Q8H0X6"/>
<dbReference type="CD-CODE" id="4299E36E">
    <property type="entry name" value="Nucleolus"/>
</dbReference>
<dbReference type="PRO" id="PR:Q8H0X6"/>
<dbReference type="Proteomes" id="UP000006548">
    <property type="component" value="Chromosome 3"/>
</dbReference>
<dbReference type="ExpressionAtlas" id="Q8H0X6">
    <property type="expression patterns" value="baseline and differential"/>
</dbReference>
<dbReference type="GO" id="GO:0005829">
    <property type="term" value="C:cytosol"/>
    <property type="evidence" value="ECO:0007005"/>
    <property type="project" value="TAIR"/>
</dbReference>
<dbReference type="GO" id="GO:0005783">
    <property type="term" value="C:endoplasmic reticulum"/>
    <property type="evidence" value="ECO:0007005"/>
    <property type="project" value="TAIR"/>
</dbReference>
<dbReference type="GO" id="GO:0005576">
    <property type="term" value="C:extracellular region"/>
    <property type="evidence" value="ECO:0007669"/>
    <property type="project" value="UniProtKB-SubCell"/>
</dbReference>
<dbReference type="GO" id="GO:0050897">
    <property type="term" value="F:cobalt ion binding"/>
    <property type="evidence" value="ECO:0007005"/>
    <property type="project" value="TAIR"/>
</dbReference>
<dbReference type="GO" id="GO:0004869">
    <property type="term" value="F:cysteine-type endopeptidase inhibitor activity"/>
    <property type="evidence" value="ECO:0000314"/>
    <property type="project" value="TAIR"/>
</dbReference>
<dbReference type="GO" id="GO:0006952">
    <property type="term" value="P:defense response"/>
    <property type="evidence" value="ECO:0007669"/>
    <property type="project" value="UniProtKB-KW"/>
</dbReference>
<dbReference type="GO" id="GO:0006972">
    <property type="term" value="P:hyperosmotic response"/>
    <property type="evidence" value="ECO:0000315"/>
    <property type="project" value="TAIR"/>
</dbReference>
<dbReference type="GO" id="GO:0009409">
    <property type="term" value="P:response to cold"/>
    <property type="evidence" value="ECO:0000315"/>
    <property type="project" value="TAIR"/>
</dbReference>
<dbReference type="GO" id="GO:0006979">
    <property type="term" value="P:response to oxidative stress"/>
    <property type="evidence" value="ECO:0000315"/>
    <property type="project" value="TAIR"/>
</dbReference>
<dbReference type="GO" id="GO:0009414">
    <property type="term" value="P:response to water deprivation"/>
    <property type="evidence" value="ECO:0000315"/>
    <property type="project" value="TAIR"/>
</dbReference>
<dbReference type="CDD" id="cd00042">
    <property type="entry name" value="CY"/>
    <property type="match status" value="2"/>
</dbReference>
<dbReference type="FunFam" id="3.10.450.10:FF:000011">
    <property type="entry name" value="Cysteine proteinase inhibitor"/>
    <property type="match status" value="1"/>
</dbReference>
<dbReference type="FunFam" id="3.10.450.10:FF:000013">
    <property type="entry name" value="Cysteine proteinase inhibitor"/>
    <property type="match status" value="1"/>
</dbReference>
<dbReference type="Gene3D" id="3.10.450.10">
    <property type="match status" value="2"/>
</dbReference>
<dbReference type="InterPro" id="IPR027214">
    <property type="entry name" value="Cystatin"/>
</dbReference>
<dbReference type="InterPro" id="IPR000010">
    <property type="entry name" value="Cystatin_dom"/>
</dbReference>
<dbReference type="InterPro" id="IPR046350">
    <property type="entry name" value="Cystatin_sf"/>
</dbReference>
<dbReference type="InterPro" id="IPR018073">
    <property type="entry name" value="Prot_inh_cystat_CS"/>
</dbReference>
<dbReference type="PANTHER" id="PTHR11413">
    <property type="entry name" value="CYSTATIN FAMILY MEMBER"/>
    <property type="match status" value="1"/>
</dbReference>
<dbReference type="PANTHER" id="PTHR11413:SF110">
    <property type="entry name" value="CYSTEINE PROTEINASE INHIBITOR 6"/>
    <property type="match status" value="1"/>
</dbReference>
<dbReference type="Pfam" id="PF16845">
    <property type="entry name" value="SQAPI"/>
    <property type="match status" value="1"/>
</dbReference>
<dbReference type="SMART" id="SM00043">
    <property type="entry name" value="CY"/>
    <property type="match status" value="1"/>
</dbReference>
<dbReference type="SUPFAM" id="SSF54403">
    <property type="entry name" value="Cystatin/monellin"/>
    <property type="match status" value="2"/>
</dbReference>
<dbReference type="PROSITE" id="PS00287">
    <property type="entry name" value="CYSTATIN"/>
    <property type="match status" value="1"/>
</dbReference>
<name>CYT6_ARATH</name>
<protein>
    <recommendedName>
        <fullName>Cysteine proteinase inhibitor 6</fullName>
        <shortName>AtCYS-6</shortName>
    </recommendedName>
    <alternativeName>
        <fullName>PIP-M</fullName>
    </alternativeName>
    <alternativeName>
        <fullName>PRLI-interacting factor M</fullName>
    </alternativeName>
</protein>
<keyword id="KW-0007">Acetylation</keyword>
<keyword id="KW-0025">Alternative splicing</keyword>
<keyword id="KW-0597">Phosphoprotein</keyword>
<keyword id="KW-0611">Plant defense</keyword>
<keyword id="KW-0646">Protease inhibitor</keyword>
<keyword id="KW-1185">Reference proteome</keyword>
<keyword id="KW-0677">Repeat</keyword>
<keyword id="KW-0964">Secreted</keyword>
<keyword id="KW-0732">Signal</keyword>
<keyword id="KW-0789">Thiol protease inhibitor</keyword>
<reference key="1">
    <citation type="journal article" date="2000" name="DNA Res.">
        <title>Structural analysis of Arabidopsis thaliana chromosome 3. II. Sequence features of the 4,251,695 bp regions covered by 90 P1, TAC and BAC clones.</title>
        <authorList>
            <person name="Kaneko T."/>
            <person name="Katoh T."/>
            <person name="Sato S."/>
            <person name="Nakamura Y."/>
            <person name="Asamizu E."/>
            <person name="Tabata S."/>
        </authorList>
    </citation>
    <scope>NUCLEOTIDE SEQUENCE [LARGE SCALE GENOMIC DNA]</scope>
    <source>
        <strain>cv. Columbia</strain>
    </source>
</reference>
<reference key="2">
    <citation type="journal article" date="2000" name="Nature">
        <title>Sequence and analysis of chromosome 3 of the plant Arabidopsis thaliana.</title>
        <authorList>
            <person name="Salanoubat M."/>
            <person name="Lemcke K."/>
            <person name="Rieger M."/>
            <person name="Ansorge W."/>
            <person name="Unseld M."/>
            <person name="Fartmann B."/>
            <person name="Valle G."/>
            <person name="Bloecker H."/>
            <person name="Perez-Alonso M."/>
            <person name="Obermaier B."/>
            <person name="Delseny M."/>
            <person name="Boutry M."/>
            <person name="Grivell L.A."/>
            <person name="Mache R."/>
            <person name="Puigdomenech P."/>
            <person name="De Simone V."/>
            <person name="Choisne N."/>
            <person name="Artiguenave F."/>
            <person name="Robert C."/>
            <person name="Brottier P."/>
            <person name="Wincker P."/>
            <person name="Cattolico L."/>
            <person name="Weissenbach J."/>
            <person name="Saurin W."/>
            <person name="Quetier F."/>
            <person name="Schaefer M."/>
            <person name="Mueller-Auer S."/>
            <person name="Gabel C."/>
            <person name="Fuchs M."/>
            <person name="Benes V."/>
            <person name="Wurmbach E."/>
            <person name="Drzonek H."/>
            <person name="Erfle H."/>
            <person name="Jordan N."/>
            <person name="Bangert S."/>
            <person name="Wiedelmann R."/>
            <person name="Kranz H."/>
            <person name="Voss H."/>
            <person name="Holland R."/>
            <person name="Brandt P."/>
            <person name="Nyakatura G."/>
            <person name="Vezzi A."/>
            <person name="D'Angelo M."/>
            <person name="Pallavicini A."/>
            <person name="Toppo S."/>
            <person name="Simionati B."/>
            <person name="Conrad A."/>
            <person name="Hornischer K."/>
            <person name="Kauer G."/>
            <person name="Loehnert T.-H."/>
            <person name="Nordsiek G."/>
            <person name="Reichelt J."/>
            <person name="Scharfe M."/>
            <person name="Schoen O."/>
            <person name="Bargues M."/>
            <person name="Terol J."/>
            <person name="Climent J."/>
            <person name="Navarro P."/>
            <person name="Collado C."/>
            <person name="Perez-Perez A."/>
            <person name="Ottenwaelder B."/>
            <person name="Duchemin D."/>
            <person name="Cooke R."/>
            <person name="Laudie M."/>
            <person name="Berger-Llauro C."/>
            <person name="Purnelle B."/>
            <person name="Masuy D."/>
            <person name="de Haan M."/>
            <person name="Maarse A.C."/>
            <person name="Alcaraz J.-P."/>
            <person name="Cottet A."/>
            <person name="Casacuberta E."/>
            <person name="Monfort A."/>
            <person name="Argiriou A."/>
            <person name="Flores M."/>
            <person name="Liguori R."/>
            <person name="Vitale D."/>
            <person name="Mannhaupt G."/>
            <person name="Haase D."/>
            <person name="Schoof H."/>
            <person name="Rudd S."/>
            <person name="Zaccaria P."/>
            <person name="Mewes H.-W."/>
            <person name="Mayer K.F.X."/>
            <person name="Kaul S."/>
            <person name="Town C.D."/>
            <person name="Koo H.L."/>
            <person name="Tallon L.J."/>
            <person name="Jenkins J."/>
            <person name="Rooney T."/>
            <person name="Rizzo M."/>
            <person name="Walts A."/>
            <person name="Utterback T."/>
            <person name="Fujii C.Y."/>
            <person name="Shea T.P."/>
            <person name="Creasy T.H."/>
            <person name="Haas B."/>
            <person name="Maiti R."/>
            <person name="Wu D."/>
            <person name="Peterson J."/>
            <person name="Van Aken S."/>
            <person name="Pai G."/>
            <person name="Militscher J."/>
            <person name="Sellers P."/>
            <person name="Gill J.E."/>
            <person name="Feldblyum T.V."/>
            <person name="Preuss D."/>
            <person name="Lin X."/>
            <person name="Nierman W.C."/>
            <person name="Salzberg S.L."/>
            <person name="White O."/>
            <person name="Venter J.C."/>
            <person name="Fraser C.M."/>
            <person name="Kaneko T."/>
            <person name="Nakamura Y."/>
            <person name="Sato S."/>
            <person name="Kato T."/>
            <person name="Asamizu E."/>
            <person name="Sasamoto S."/>
            <person name="Kimura T."/>
            <person name="Idesawa K."/>
            <person name="Kawashima K."/>
            <person name="Kishida Y."/>
            <person name="Kiyokawa C."/>
            <person name="Kohara M."/>
            <person name="Matsumoto M."/>
            <person name="Matsuno A."/>
            <person name="Muraki A."/>
            <person name="Nakayama S."/>
            <person name="Nakazaki N."/>
            <person name="Shinpo S."/>
            <person name="Takeuchi C."/>
            <person name="Wada T."/>
            <person name="Watanabe A."/>
            <person name="Yamada M."/>
            <person name="Yasuda M."/>
            <person name="Tabata S."/>
        </authorList>
    </citation>
    <scope>NUCLEOTIDE SEQUENCE [LARGE SCALE GENOMIC DNA]</scope>
    <source>
        <strain>cv. Columbia</strain>
    </source>
</reference>
<reference key="3">
    <citation type="journal article" date="2017" name="Plant J.">
        <title>Araport11: a complete reannotation of the Arabidopsis thaliana reference genome.</title>
        <authorList>
            <person name="Cheng C.Y."/>
            <person name="Krishnakumar V."/>
            <person name="Chan A.P."/>
            <person name="Thibaud-Nissen F."/>
            <person name="Schobel S."/>
            <person name="Town C.D."/>
        </authorList>
    </citation>
    <scope>GENOME REANNOTATION</scope>
    <source>
        <strain>cv. Columbia</strain>
    </source>
</reference>
<reference key="4">
    <citation type="submission" date="2002-03" db="EMBL/GenBank/DDBJ databases">
        <title>Full-length cDNA from Arabidopsis thaliana.</title>
        <authorList>
            <person name="Brover V.V."/>
            <person name="Troukhan M.E."/>
            <person name="Alexandrov N.A."/>
            <person name="Lu Y.-P."/>
            <person name="Flavell R.B."/>
            <person name="Feldmann K.A."/>
        </authorList>
    </citation>
    <scope>NUCLEOTIDE SEQUENCE [LARGE SCALE MRNA] (ISOFORM 2)</scope>
</reference>
<reference key="5">
    <citation type="journal article" date="2003" name="Science">
        <title>Empirical analysis of transcriptional activity in the Arabidopsis genome.</title>
        <authorList>
            <person name="Yamada K."/>
            <person name="Lim J."/>
            <person name="Dale J.M."/>
            <person name="Chen H."/>
            <person name="Shinn P."/>
            <person name="Palm C.J."/>
            <person name="Southwick A.M."/>
            <person name="Wu H.C."/>
            <person name="Kim C.J."/>
            <person name="Nguyen M."/>
            <person name="Pham P.K."/>
            <person name="Cheuk R.F."/>
            <person name="Karlin-Newmann G."/>
            <person name="Liu S.X."/>
            <person name="Lam B."/>
            <person name="Sakano H."/>
            <person name="Wu T."/>
            <person name="Yu G."/>
            <person name="Miranda M."/>
            <person name="Quach H.L."/>
            <person name="Tripp M."/>
            <person name="Chang C.H."/>
            <person name="Lee J.M."/>
            <person name="Toriumi M.J."/>
            <person name="Chan M.M."/>
            <person name="Tang C.C."/>
            <person name="Onodera C.S."/>
            <person name="Deng J.M."/>
            <person name="Akiyama K."/>
            <person name="Ansari Y."/>
            <person name="Arakawa T."/>
            <person name="Banh J."/>
            <person name="Banno F."/>
            <person name="Bowser L."/>
            <person name="Brooks S.Y."/>
            <person name="Carninci P."/>
            <person name="Chao Q."/>
            <person name="Choy N."/>
            <person name="Enju A."/>
            <person name="Goldsmith A.D."/>
            <person name="Gurjal M."/>
            <person name="Hansen N.F."/>
            <person name="Hayashizaki Y."/>
            <person name="Johnson-Hopson C."/>
            <person name="Hsuan V.W."/>
            <person name="Iida K."/>
            <person name="Karnes M."/>
            <person name="Khan S."/>
            <person name="Koesema E."/>
            <person name="Ishida J."/>
            <person name="Jiang P.X."/>
            <person name="Jones T."/>
            <person name="Kawai J."/>
            <person name="Kamiya A."/>
            <person name="Meyers C."/>
            <person name="Nakajima M."/>
            <person name="Narusaka M."/>
            <person name="Seki M."/>
            <person name="Sakurai T."/>
            <person name="Satou M."/>
            <person name="Tamse R."/>
            <person name="Vaysberg M."/>
            <person name="Wallender E.K."/>
            <person name="Wong C."/>
            <person name="Yamamura Y."/>
            <person name="Yuan S."/>
            <person name="Shinozaki K."/>
            <person name="Davis R.W."/>
            <person name="Theologis A."/>
            <person name="Ecker J.R."/>
        </authorList>
    </citation>
    <scope>NUCLEOTIDE SEQUENCE [LARGE SCALE MRNA] OF 10-234 (ISOFORM 1)</scope>
    <source>
        <strain>cv. Columbia</strain>
    </source>
</reference>
<reference key="6">
    <citation type="journal article" date="1998" name="Genes Dev.">
        <title>Pleiotropic control of glucose and hormone responses by PRL1, a nuclear WD protein, in Arabidopsis.</title>
        <authorList>
            <person name="Nemeth K."/>
            <person name="Salchert K."/>
            <person name="Putnoky P."/>
            <person name="Bhalerao R."/>
            <person name="Koncz-Kalman Z."/>
            <person name="Stankovic-Stangeland B."/>
            <person name="Bako L."/>
            <person name="Mathur J."/>
            <person name="Oekresz L."/>
            <person name="Stabel S."/>
            <person name="Geigenberger P."/>
            <person name="Stitt M."/>
            <person name="Redei G.P."/>
            <person name="Schell J."/>
            <person name="Koncz C."/>
        </authorList>
    </citation>
    <scope>NUCLEOTIDE SEQUENCE [MRNA] OF 27-234 (ISOFORMS 1/2)</scope>
    <source>
        <strain>cv. Columbia</strain>
    </source>
</reference>
<reference key="7">
    <citation type="journal article" date="2005" name="Mol. Genet. Genomics">
        <title>Comparative phylogenetic analysis of cystatin gene families from arabidopsis, rice and barley.</title>
        <authorList>
            <person name="Martinez M."/>
            <person name="Abraham Z."/>
            <person name="Carbonero P."/>
            <person name="Diaz I."/>
        </authorList>
    </citation>
    <scope>GENE FAMILY</scope>
</reference>
<reference key="8">
    <citation type="journal article" date="2012" name="J. Proteome Res.">
        <title>Identification of phosphoproteins in Arabidopsis thaliana leaves using polyethylene glycol fractionation, immobilized metal-ion affinity chromatography, two-dimensional gel electrophoresis and mass spectrometry.</title>
        <authorList>
            <person name="Aryal U.K."/>
            <person name="Krochko J.E."/>
            <person name="Ross A.R."/>
        </authorList>
    </citation>
    <scope>PHOSPHORYLATION [LARGE SCALE ANALYSIS] AT SER-174</scope>
    <scope>IDENTIFICATION BY MASS SPECTROMETRY [LARGE SCALE ANALYSIS]</scope>
</reference>
<reference key="9">
    <citation type="journal article" date="2012" name="Mol. Cell. Proteomics">
        <title>Comparative large-scale characterisation of plant vs. mammal proteins reveals similar and idiosyncratic N-alpha acetylation features.</title>
        <authorList>
            <person name="Bienvenut W.V."/>
            <person name="Sumpton D."/>
            <person name="Martinez A."/>
            <person name="Lilla S."/>
            <person name="Espagne C."/>
            <person name="Meinnel T."/>
            <person name="Giglione C."/>
        </authorList>
    </citation>
    <scope>ACETYLATION [LARGE SCALE ANALYSIS] AT ALA-2 (ISOFORM 2)</scope>
    <scope>CLEAVAGE OF INITIATOR METHIONINE [LARGE SCALE ANALYSIS] (ISOFORM 2)</scope>
    <scope>IDENTIFICATION BY MASS SPECTROMETRY [LARGE SCALE ANALYSIS]</scope>
</reference>